<reference key="1">
    <citation type="journal article" date="2002" name="Genomics">
        <title>Obox, a family of homeobox genes preferentially expressed in germ cells.</title>
        <authorList>
            <person name="Rajkovic A."/>
            <person name="Yan C."/>
            <person name="Yan W."/>
            <person name="Klysik M."/>
            <person name="Matzuk M.M."/>
        </authorList>
    </citation>
    <scope>NUCLEOTIDE SEQUENCE [GENOMIC DNA]</scope>
    <source>
        <strain>C57BL/6J</strain>
    </source>
</reference>
<reference key="2">
    <citation type="journal article" date="2005" name="Science">
        <title>The transcriptional landscape of the mammalian genome.</title>
        <authorList>
            <person name="Carninci P."/>
            <person name="Kasukawa T."/>
            <person name="Katayama S."/>
            <person name="Gough J."/>
            <person name="Frith M.C."/>
            <person name="Maeda N."/>
            <person name="Oyama R."/>
            <person name="Ravasi T."/>
            <person name="Lenhard B."/>
            <person name="Wells C."/>
            <person name="Kodzius R."/>
            <person name="Shimokawa K."/>
            <person name="Bajic V.B."/>
            <person name="Brenner S.E."/>
            <person name="Batalov S."/>
            <person name="Forrest A.R."/>
            <person name="Zavolan M."/>
            <person name="Davis M.J."/>
            <person name="Wilming L.G."/>
            <person name="Aidinis V."/>
            <person name="Allen J.E."/>
            <person name="Ambesi-Impiombato A."/>
            <person name="Apweiler R."/>
            <person name="Aturaliya R.N."/>
            <person name="Bailey T.L."/>
            <person name="Bansal M."/>
            <person name="Baxter L."/>
            <person name="Beisel K.W."/>
            <person name="Bersano T."/>
            <person name="Bono H."/>
            <person name="Chalk A.M."/>
            <person name="Chiu K.P."/>
            <person name="Choudhary V."/>
            <person name="Christoffels A."/>
            <person name="Clutterbuck D.R."/>
            <person name="Crowe M.L."/>
            <person name="Dalla E."/>
            <person name="Dalrymple B.P."/>
            <person name="de Bono B."/>
            <person name="Della Gatta G."/>
            <person name="di Bernardo D."/>
            <person name="Down T."/>
            <person name="Engstrom P."/>
            <person name="Fagiolini M."/>
            <person name="Faulkner G."/>
            <person name="Fletcher C.F."/>
            <person name="Fukushima T."/>
            <person name="Furuno M."/>
            <person name="Futaki S."/>
            <person name="Gariboldi M."/>
            <person name="Georgii-Hemming P."/>
            <person name="Gingeras T.R."/>
            <person name="Gojobori T."/>
            <person name="Green R.E."/>
            <person name="Gustincich S."/>
            <person name="Harbers M."/>
            <person name="Hayashi Y."/>
            <person name="Hensch T.K."/>
            <person name="Hirokawa N."/>
            <person name="Hill D."/>
            <person name="Huminiecki L."/>
            <person name="Iacono M."/>
            <person name="Ikeo K."/>
            <person name="Iwama A."/>
            <person name="Ishikawa T."/>
            <person name="Jakt M."/>
            <person name="Kanapin A."/>
            <person name="Katoh M."/>
            <person name="Kawasawa Y."/>
            <person name="Kelso J."/>
            <person name="Kitamura H."/>
            <person name="Kitano H."/>
            <person name="Kollias G."/>
            <person name="Krishnan S.P."/>
            <person name="Kruger A."/>
            <person name="Kummerfeld S.K."/>
            <person name="Kurochkin I.V."/>
            <person name="Lareau L.F."/>
            <person name="Lazarevic D."/>
            <person name="Lipovich L."/>
            <person name="Liu J."/>
            <person name="Liuni S."/>
            <person name="McWilliam S."/>
            <person name="Madan Babu M."/>
            <person name="Madera M."/>
            <person name="Marchionni L."/>
            <person name="Matsuda H."/>
            <person name="Matsuzawa S."/>
            <person name="Miki H."/>
            <person name="Mignone F."/>
            <person name="Miyake S."/>
            <person name="Morris K."/>
            <person name="Mottagui-Tabar S."/>
            <person name="Mulder N."/>
            <person name="Nakano N."/>
            <person name="Nakauchi H."/>
            <person name="Ng P."/>
            <person name="Nilsson R."/>
            <person name="Nishiguchi S."/>
            <person name="Nishikawa S."/>
            <person name="Nori F."/>
            <person name="Ohara O."/>
            <person name="Okazaki Y."/>
            <person name="Orlando V."/>
            <person name="Pang K.C."/>
            <person name="Pavan W.J."/>
            <person name="Pavesi G."/>
            <person name="Pesole G."/>
            <person name="Petrovsky N."/>
            <person name="Piazza S."/>
            <person name="Reed J."/>
            <person name="Reid J.F."/>
            <person name="Ring B.Z."/>
            <person name="Ringwald M."/>
            <person name="Rost B."/>
            <person name="Ruan Y."/>
            <person name="Salzberg S.L."/>
            <person name="Sandelin A."/>
            <person name="Schneider C."/>
            <person name="Schoenbach C."/>
            <person name="Sekiguchi K."/>
            <person name="Semple C.A."/>
            <person name="Seno S."/>
            <person name="Sessa L."/>
            <person name="Sheng Y."/>
            <person name="Shibata Y."/>
            <person name="Shimada H."/>
            <person name="Shimada K."/>
            <person name="Silva D."/>
            <person name="Sinclair B."/>
            <person name="Sperling S."/>
            <person name="Stupka E."/>
            <person name="Sugiura K."/>
            <person name="Sultana R."/>
            <person name="Takenaka Y."/>
            <person name="Taki K."/>
            <person name="Tammoja K."/>
            <person name="Tan S.L."/>
            <person name="Tang S."/>
            <person name="Taylor M.S."/>
            <person name="Tegner J."/>
            <person name="Teichmann S.A."/>
            <person name="Ueda H.R."/>
            <person name="van Nimwegen E."/>
            <person name="Verardo R."/>
            <person name="Wei C.L."/>
            <person name="Yagi K."/>
            <person name="Yamanishi H."/>
            <person name="Zabarovsky E."/>
            <person name="Zhu S."/>
            <person name="Zimmer A."/>
            <person name="Hide W."/>
            <person name="Bult C."/>
            <person name="Grimmond S.M."/>
            <person name="Teasdale R.D."/>
            <person name="Liu E.T."/>
            <person name="Brusic V."/>
            <person name="Quackenbush J."/>
            <person name="Wahlestedt C."/>
            <person name="Mattick J.S."/>
            <person name="Hume D.A."/>
            <person name="Kai C."/>
            <person name="Sasaki D."/>
            <person name="Tomaru Y."/>
            <person name="Fukuda S."/>
            <person name="Kanamori-Katayama M."/>
            <person name="Suzuki M."/>
            <person name="Aoki J."/>
            <person name="Arakawa T."/>
            <person name="Iida J."/>
            <person name="Imamura K."/>
            <person name="Itoh M."/>
            <person name="Kato T."/>
            <person name="Kawaji H."/>
            <person name="Kawagashira N."/>
            <person name="Kawashima T."/>
            <person name="Kojima M."/>
            <person name="Kondo S."/>
            <person name="Konno H."/>
            <person name="Nakano K."/>
            <person name="Ninomiya N."/>
            <person name="Nishio T."/>
            <person name="Okada M."/>
            <person name="Plessy C."/>
            <person name="Shibata K."/>
            <person name="Shiraki T."/>
            <person name="Suzuki S."/>
            <person name="Tagami M."/>
            <person name="Waki K."/>
            <person name="Watahiki A."/>
            <person name="Okamura-Oho Y."/>
            <person name="Suzuki H."/>
            <person name="Kawai J."/>
            <person name="Hayashizaki Y."/>
        </authorList>
    </citation>
    <scope>NUCLEOTIDE SEQUENCE [LARGE SCALE MRNA]</scope>
    <source>
        <strain>C57BL/6J</strain>
        <tissue>Egg</tissue>
    </source>
</reference>
<reference key="3">
    <citation type="journal article" date="2009" name="PLoS Biol.">
        <title>Lineage-specific biology revealed by a finished genome assembly of the mouse.</title>
        <authorList>
            <person name="Church D.M."/>
            <person name="Goodstadt L."/>
            <person name="Hillier L.W."/>
            <person name="Zody M.C."/>
            <person name="Goldstein S."/>
            <person name="She X."/>
            <person name="Bult C.J."/>
            <person name="Agarwala R."/>
            <person name="Cherry J.L."/>
            <person name="DiCuccio M."/>
            <person name="Hlavina W."/>
            <person name="Kapustin Y."/>
            <person name="Meric P."/>
            <person name="Maglott D."/>
            <person name="Birtle Z."/>
            <person name="Marques A.C."/>
            <person name="Graves T."/>
            <person name="Zhou S."/>
            <person name="Teague B."/>
            <person name="Potamousis K."/>
            <person name="Churas C."/>
            <person name="Place M."/>
            <person name="Herschleb J."/>
            <person name="Runnheim R."/>
            <person name="Forrest D."/>
            <person name="Amos-Landgraf J."/>
            <person name="Schwartz D.C."/>
            <person name="Cheng Z."/>
            <person name="Lindblad-Toh K."/>
            <person name="Eichler E.E."/>
            <person name="Ponting C.P."/>
        </authorList>
    </citation>
    <scope>NUCLEOTIDE SEQUENCE [LARGE SCALE GENOMIC DNA]</scope>
    <source>
        <strain>C57BL/6J</strain>
    </source>
</reference>
<reference key="4">
    <citation type="journal article" date="2004" name="Genome Res.">
        <title>The status, quality, and expansion of the NIH full-length cDNA project: the Mammalian Gene Collection (MGC).</title>
        <authorList>
            <consortium name="The MGC Project Team"/>
        </authorList>
    </citation>
    <scope>NUCLEOTIDE SEQUENCE [LARGE SCALE MRNA]</scope>
    <source>
        <tissue>Brain</tissue>
    </source>
</reference>
<reference key="5">
    <citation type="journal article" date="2017" name="Stem Cell Reports">
        <title>Oocyte-specific homeobox 1, Obox1, facilitates reprogramming by promoting mesenchymal-to-epithelial transition and mitigating cell hyperproliferation.</title>
        <authorList>
            <person name="Wu L."/>
            <person name="Wu Y."/>
            <person name="Peng B."/>
            <person name="Hou Z."/>
            <person name="Dong Y."/>
            <person name="Chen K."/>
            <person name="Guo M."/>
            <person name="Li H."/>
            <person name="Chen X."/>
            <person name="Kou X."/>
            <person name="Zhao Y."/>
            <person name="Bi Y."/>
            <person name="Wang Y."/>
            <person name="Wang H."/>
            <person name="Le R."/>
            <person name="Kang L."/>
            <person name="Gao S."/>
        </authorList>
    </citation>
    <scope>FUNCTION</scope>
</reference>
<reference key="6">
    <citation type="journal article" date="2023" name="Nature">
        <title>OBOX regulates murine zygotic genome activation and early development.</title>
        <authorList>
            <person name="Ji S."/>
            <person name="Chen F."/>
            <person name="Stein P."/>
            <person name="Wang J."/>
            <person name="Zhou Z."/>
            <person name="Wang L."/>
            <person name="Zhao Q."/>
            <person name="Lin Z."/>
            <person name="Liu B."/>
            <person name="Xu K."/>
            <person name="Lai F."/>
            <person name="Xiong Z."/>
            <person name="Hu X."/>
            <person name="Kong T."/>
            <person name="Kong F."/>
            <person name="Huang B."/>
            <person name="Wang Q."/>
            <person name="Xu Q."/>
            <person name="Fan Q."/>
            <person name="Liu L."/>
            <person name="Williams C.J."/>
            <person name="Schultz R.M."/>
            <person name="Xie W."/>
        </authorList>
    </citation>
    <scope>FUNCTION</scope>
    <scope>TISSUE SPECIFICITY</scope>
    <scope>DEVELOPMENTAL STAGE</scope>
    <scope>DISRUPTION PHENOTYPE</scope>
</reference>
<accession>Q9D350</accession>
<accession>G3UX03</accession>
<gene>
    <name evidence="5 7" type="primary">Obox1</name>
</gene>
<sequence>MAEGPSLHPKLQVDSNIPIEISSQIPQEPARNLAFQMRQSPLVTPGSTTKSSLSVPERNLLKQESQGPSRQSGCMLLSDKYVNKQTGPMASRKFRKERTVYTKEQQGLLQKHFDECQYPNKKKIVELALSVGVTKREIKIWFKNNRAKYRRMNLQNIEQVLPESNGSSKAVSESTHFPVVASDNGESMCSGTFGEDSIPKFNCS</sequence>
<comment type="function">
    <text evidence="3 4">Transcription factor required for zygotic genome activation (ZGA), a critical event in early embryonic development during which the developmental control passes from maternally provided mRNAs to the expression of the zygotic genome after fertilization (PubMed:37459895). Together with other Obox family members, required in early two-cell stage embryos to kick-start the major ZGA wave by facilitating RNA Polymerase II 'pre-configuration', during which RNA Polymerase II relocates from the initial one-cell stage binding targets to ZGA gene promoters and distal enhancers (PubMed:37459895). Mechanistically, promotes recruitment of RNA Polymerase II from (CG-rich) non-ZGA genes to (CG-poor) ZGA genes at the two-cell stage (PubMed:37459895). Binds to regulatory DNA sequences containing a 5'-ACNCCTTTAATCCCAG-3' sequence motif (PubMed:37459895). Most maternal and zygotic Obox family proteins can compensate for one another (PubMed:37459895). In addition to its role in ZGA, promotes embryonic stem cell pluripotency (PubMed:29033306).</text>
</comment>
<comment type="subcellular location">
    <subcellularLocation>
        <location evidence="1">Nucleus</location>
    </subcellularLocation>
</comment>
<comment type="tissue specificity">
    <text evidence="4">Specifically expressed in oocytes and early embryos.</text>
</comment>
<comment type="developmental stage">
    <text evidence="4">Expressed maternally with high expression in oocytes and early embryos before expression declines after zygotic genome activation (ZGA).</text>
</comment>
<comment type="disruption phenotype">
    <text evidence="4">No visible phenotype; mice are viable and fertile (PubMed:37459895). Female mice lacking maternally transcribed Obox1, Obox2, Obox5, Obox7 as well as zygotically expressed Obox3 and Obox4 are infertile: embryos arrest at two-four cell stage due to impaired zygotic genome activation (ZGA) (PubMed:37459895).</text>
</comment>
<comment type="similarity">
    <text evidence="6">Belongs to the paired homeobox family. Obox subfamily.</text>
</comment>
<evidence type="ECO:0000255" key="1">
    <source>
        <dbReference type="PROSITE-ProRule" id="PRU00108"/>
    </source>
</evidence>
<evidence type="ECO:0000256" key="2">
    <source>
        <dbReference type="SAM" id="MobiDB-lite"/>
    </source>
</evidence>
<evidence type="ECO:0000269" key="3">
    <source>
    </source>
</evidence>
<evidence type="ECO:0000269" key="4">
    <source>
    </source>
</evidence>
<evidence type="ECO:0000303" key="5">
    <source>
    </source>
</evidence>
<evidence type="ECO:0000305" key="6"/>
<evidence type="ECO:0000312" key="7">
    <source>
        <dbReference type="MGI" id="MGI:1918718"/>
    </source>
</evidence>
<protein>
    <recommendedName>
        <fullName evidence="6">Oocyte-specific homeobox protein 1</fullName>
    </recommendedName>
</protein>
<feature type="chain" id="PRO_0000459210" description="Oocyte-specific homeobox protein 1">
    <location>
        <begin position="1"/>
        <end position="204"/>
    </location>
</feature>
<feature type="DNA-binding region" description="Homeobox" evidence="1">
    <location>
        <begin position="94"/>
        <end position="153"/>
    </location>
</feature>
<feature type="region of interest" description="Disordered" evidence="2">
    <location>
        <begin position="28"/>
        <end position="73"/>
    </location>
</feature>
<feature type="compositionally biased region" description="Polar residues" evidence="2">
    <location>
        <begin position="37"/>
        <end position="54"/>
    </location>
</feature>
<feature type="compositionally biased region" description="Polar residues" evidence="2">
    <location>
        <begin position="62"/>
        <end position="72"/>
    </location>
</feature>
<organism>
    <name type="scientific">Mus musculus</name>
    <name type="common">Mouse</name>
    <dbReference type="NCBI Taxonomy" id="10090"/>
    <lineage>
        <taxon>Eukaryota</taxon>
        <taxon>Metazoa</taxon>
        <taxon>Chordata</taxon>
        <taxon>Craniata</taxon>
        <taxon>Vertebrata</taxon>
        <taxon>Euteleostomi</taxon>
        <taxon>Mammalia</taxon>
        <taxon>Eutheria</taxon>
        <taxon>Euarchontoglires</taxon>
        <taxon>Glires</taxon>
        <taxon>Rodentia</taxon>
        <taxon>Myomorpha</taxon>
        <taxon>Muroidea</taxon>
        <taxon>Muridae</taxon>
        <taxon>Murinae</taxon>
        <taxon>Mus</taxon>
        <taxon>Mus</taxon>
    </lineage>
</organism>
<dbReference type="EMBL" id="AF461106">
    <property type="protein sequence ID" value="AAL68800.1"/>
    <property type="molecule type" value="Genomic_DNA"/>
</dbReference>
<dbReference type="EMBL" id="AK018362">
    <property type="protein sequence ID" value="BAB31178.1"/>
    <property type="molecule type" value="mRNA"/>
</dbReference>
<dbReference type="EMBL" id="AK136061">
    <property type="protein sequence ID" value="BAE22803.1"/>
    <property type="molecule type" value="mRNA"/>
</dbReference>
<dbReference type="EMBL" id="BC141323">
    <property type="protein sequence ID" value="AAI41324.1"/>
    <property type="molecule type" value="mRNA"/>
</dbReference>
<dbReference type="EMBL" id="BC141324">
    <property type="protein sequence ID" value="AAI41325.1"/>
    <property type="molecule type" value="mRNA"/>
</dbReference>
<dbReference type="CCDS" id="CCDS20837.1"/>
<dbReference type="RefSeq" id="NP_082078.1">
    <property type="nucleotide sequence ID" value="NM_027802.2"/>
</dbReference>
<dbReference type="SMR" id="Q9D350"/>
<dbReference type="FunCoup" id="Q9D350">
    <property type="interactions" value="5"/>
</dbReference>
<dbReference type="STRING" id="10090.ENSMUSP00000067691"/>
<dbReference type="GlyGen" id="Q9D350">
    <property type="glycosylation" value="1 site"/>
</dbReference>
<dbReference type="PaxDb" id="10090-ENSMUSP00000067691"/>
<dbReference type="DNASU" id="71468"/>
<dbReference type="Ensembl" id="ENSMUST00000067288.15">
    <property type="protein sequence ID" value="ENSMUSP00000067691.9"/>
    <property type="gene ID" value="ENSMUSG00000054310.17"/>
</dbReference>
<dbReference type="Ensembl" id="ENSMUST00000172463.8">
    <property type="protein sequence ID" value="ENSMUSP00000133504.2"/>
    <property type="gene ID" value="ENSMUSG00000054310.17"/>
</dbReference>
<dbReference type="Ensembl" id="ENSMUST00000172881.8">
    <property type="protein sequence ID" value="ENSMUSP00000134688.2"/>
    <property type="gene ID" value="ENSMUSG00000054310.17"/>
</dbReference>
<dbReference type="Ensembl" id="ENSMUST00000173443.8">
    <property type="protein sequence ID" value="ENSMUSP00000134043.2"/>
    <property type="gene ID" value="ENSMUSG00000054310.17"/>
</dbReference>
<dbReference type="Ensembl" id="ENSMUST00000181001.8">
    <property type="protein sequence ID" value="ENSMUSP00000138010.2"/>
    <property type="gene ID" value="ENSMUSG00000054310.17"/>
</dbReference>
<dbReference type="GeneID" id="71468"/>
<dbReference type="KEGG" id="mmu:71468"/>
<dbReference type="UCSC" id="uc009fgh.1">
    <property type="organism name" value="mouse"/>
</dbReference>
<dbReference type="AGR" id="MGI:1918718"/>
<dbReference type="CTD" id="71468"/>
<dbReference type="MGI" id="MGI:1918718">
    <property type="gene designation" value="Obox1"/>
</dbReference>
<dbReference type="VEuPathDB" id="HostDB:ENSMUSG00000054310"/>
<dbReference type="eggNOG" id="KOG0850">
    <property type="taxonomic scope" value="Eukaryota"/>
</dbReference>
<dbReference type="GeneTree" id="ENSGT00390000000605"/>
<dbReference type="HOGENOM" id="CLU_129629_0_0_1"/>
<dbReference type="OrthoDB" id="80188at9989"/>
<dbReference type="TreeFam" id="TF339053"/>
<dbReference type="BioGRID-ORCS" id="71468">
    <property type="hits" value="4 hits in 44 CRISPR screens"/>
</dbReference>
<dbReference type="PRO" id="PR:Q9D350"/>
<dbReference type="Proteomes" id="UP000000589">
    <property type="component" value="Chromosome 7"/>
</dbReference>
<dbReference type="RNAct" id="Q9D350">
    <property type="molecule type" value="protein"/>
</dbReference>
<dbReference type="Bgee" id="ENSMUSG00000054310">
    <property type="expression patterns" value="Expressed in secondary oocyte and 24 other cell types or tissues"/>
</dbReference>
<dbReference type="ExpressionAtlas" id="Q9D350">
    <property type="expression patterns" value="baseline and differential"/>
</dbReference>
<dbReference type="GO" id="GO:0005634">
    <property type="term" value="C:nucleus"/>
    <property type="evidence" value="ECO:0007669"/>
    <property type="project" value="UniProtKB-SubCell"/>
</dbReference>
<dbReference type="GO" id="GO:0003677">
    <property type="term" value="F:DNA binding"/>
    <property type="evidence" value="ECO:0007669"/>
    <property type="project" value="UniProtKB-KW"/>
</dbReference>
<dbReference type="GO" id="GO:0000981">
    <property type="term" value="F:DNA-binding transcription factor activity, RNA polymerase II-specific"/>
    <property type="evidence" value="ECO:0000315"/>
    <property type="project" value="UniProtKB"/>
</dbReference>
<dbReference type="GO" id="GO:0160021">
    <property type="term" value="P:maternal-to-zygotic transition of gene expression"/>
    <property type="evidence" value="ECO:0000315"/>
    <property type="project" value="UniProtKB"/>
</dbReference>
<dbReference type="GO" id="GO:0019827">
    <property type="term" value="P:stem cell population maintenance"/>
    <property type="evidence" value="ECO:0000315"/>
    <property type="project" value="UniProtKB"/>
</dbReference>
<dbReference type="CDD" id="cd00086">
    <property type="entry name" value="homeodomain"/>
    <property type="match status" value="1"/>
</dbReference>
<dbReference type="Gene3D" id="1.10.10.60">
    <property type="entry name" value="Homeodomain-like"/>
    <property type="match status" value="1"/>
</dbReference>
<dbReference type="InterPro" id="IPR050460">
    <property type="entry name" value="Distal-less_Homeobox_TF"/>
</dbReference>
<dbReference type="InterPro" id="IPR001356">
    <property type="entry name" value="HD"/>
</dbReference>
<dbReference type="InterPro" id="IPR017970">
    <property type="entry name" value="Homeobox_CS"/>
</dbReference>
<dbReference type="InterPro" id="IPR009057">
    <property type="entry name" value="Homeodomain-like_sf"/>
</dbReference>
<dbReference type="PANTHER" id="PTHR24327">
    <property type="entry name" value="HOMEOBOX PROTEIN"/>
    <property type="match status" value="1"/>
</dbReference>
<dbReference type="PANTHER" id="PTHR24327:SF87">
    <property type="entry name" value="OBOX1-RELATED"/>
    <property type="match status" value="1"/>
</dbReference>
<dbReference type="Pfam" id="PF00046">
    <property type="entry name" value="Homeodomain"/>
    <property type="match status" value="1"/>
</dbReference>
<dbReference type="SMART" id="SM00389">
    <property type="entry name" value="HOX"/>
    <property type="match status" value="1"/>
</dbReference>
<dbReference type="SUPFAM" id="SSF46689">
    <property type="entry name" value="Homeodomain-like"/>
    <property type="match status" value="1"/>
</dbReference>
<dbReference type="PROSITE" id="PS00027">
    <property type="entry name" value="HOMEOBOX_1"/>
    <property type="match status" value="1"/>
</dbReference>
<dbReference type="PROSITE" id="PS50071">
    <property type="entry name" value="HOMEOBOX_2"/>
    <property type="match status" value="1"/>
</dbReference>
<name>OBOX1_MOUSE</name>
<proteinExistence type="evidence at transcript level"/>
<keyword id="KW-0217">Developmental protein</keyword>
<keyword id="KW-0238">DNA-binding</keyword>
<keyword id="KW-0371">Homeobox</keyword>
<keyword id="KW-0539">Nucleus</keyword>
<keyword id="KW-1185">Reference proteome</keyword>
<keyword id="KW-0804">Transcription</keyword>
<keyword id="KW-0805">Transcription regulation</keyword>